<protein>
    <recommendedName>
        <fullName evidence="1">Thiamine-phosphate synthase</fullName>
        <shortName evidence="1">TP synthase</shortName>
        <shortName evidence="1">TPS</shortName>
        <ecNumber evidence="1">2.5.1.3</ecNumber>
    </recommendedName>
    <alternativeName>
        <fullName evidence="1">Thiamine-phosphate pyrophosphorylase</fullName>
        <shortName evidence="1">TMP pyrophosphorylase</shortName>
        <shortName evidence="1">TMP-PPase</shortName>
    </alternativeName>
</protein>
<proteinExistence type="inferred from homology"/>
<comment type="function">
    <text evidence="1">Condenses 4-methyl-5-(beta-hydroxyethyl)thiazole monophosphate (THZ-P) and 2-methyl-4-amino-5-hydroxymethyl pyrimidine pyrophosphate (HMP-PP) to form thiamine monophosphate (TMP).</text>
</comment>
<comment type="catalytic activity">
    <reaction evidence="1">
        <text>2-[(2R,5Z)-2-carboxy-4-methylthiazol-5(2H)-ylidene]ethyl phosphate + 4-amino-2-methyl-5-(diphosphooxymethyl)pyrimidine + 2 H(+) = thiamine phosphate + CO2 + diphosphate</text>
        <dbReference type="Rhea" id="RHEA:47844"/>
        <dbReference type="ChEBI" id="CHEBI:15378"/>
        <dbReference type="ChEBI" id="CHEBI:16526"/>
        <dbReference type="ChEBI" id="CHEBI:33019"/>
        <dbReference type="ChEBI" id="CHEBI:37575"/>
        <dbReference type="ChEBI" id="CHEBI:57841"/>
        <dbReference type="ChEBI" id="CHEBI:62899"/>
        <dbReference type="EC" id="2.5.1.3"/>
    </reaction>
</comment>
<comment type="catalytic activity">
    <reaction evidence="1">
        <text>2-(2-carboxy-4-methylthiazol-5-yl)ethyl phosphate + 4-amino-2-methyl-5-(diphosphooxymethyl)pyrimidine + 2 H(+) = thiamine phosphate + CO2 + diphosphate</text>
        <dbReference type="Rhea" id="RHEA:47848"/>
        <dbReference type="ChEBI" id="CHEBI:15378"/>
        <dbReference type="ChEBI" id="CHEBI:16526"/>
        <dbReference type="ChEBI" id="CHEBI:33019"/>
        <dbReference type="ChEBI" id="CHEBI:37575"/>
        <dbReference type="ChEBI" id="CHEBI:57841"/>
        <dbReference type="ChEBI" id="CHEBI:62890"/>
        <dbReference type="EC" id="2.5.1.3"/>
    </reaction>
</comment>
<comment type="catalytic activity">
    <reaction evidence="1">
        <text>4-methyl-5-(2-phosphooxyethyl)-thiazole + 4-amino-2-methyl-5-(diphosphooxymethyl)pyrimidine + H(+) = thiamine phosphate + diphosphate</text>
        <dbReference type="Rhea" id="RHEA:22328"/>
        <dbReference type="ChEBI" id="CHEBI:15378"/>
        <dbReference type="ChEBI" id="CHEBI:33019"/>
        <dbReference type="ChEBI" id="CHEBI:37575"/>
        <dbReference type="ChEBI" id="CHEBI:57841"/>
        <dbReference type="ChEBI" id="CHEBI:58296"/>
        <dbReference type="EC" id="2.5.1.3"/>
    </reaction>
</comment>
<comment type="cofactor">
    <cofactor evidence="1">
        <name>Mg(2+)</name>
        <dbReference type="ChEBI" id="CHEBI:18420"/>
    </cofactor>
    <text evidence="1">Binds 1 Mg(2+) ion per subunit.</text>
</comment>
<comment type="pathway">
    <text evidence="1">Cofactor biosynthesis; thiamine diphosphate biosynthesis; thiamine phosphate from 4-amino-2-methyl-5-diphosphomethylpyrimidine and 4-methyl-5-(2-phosphoethyl)-thiazole: step 1/1.</text>
</comment>
<comment type="similarity">
    <text evidence="1">Belongs to the thiamine-phosphate synthase family.</text>
</comment>
<feature type="chain" id="PRO_0000336405" description="Thiamine-phosphate synthase">
    <location>
        <begin position="1"/>
        <end position="209"/>
    </location>
</feature>
<feature type="binding site" evidence="1">
    <location>
        <begin position="41"/>
        <end position="45"/>
    </location>
    <ligand>
        <name>4-amino-2-methyl-5-(diphosphooxymethyl)pyrimidine</name>
        <dbReference type="ChEBI" id="CHEBI:57841"/>
    </ligand>
</feature>
<feature type="binding site" evidence="1">
    <location>
        <position position="73"/>
    </location>
    <ligand>
        <name>4-amino-2-methyl-5-(diphosphooxymethyl)pyrimidine</name>
        <dbReference type="ChEBI" id="CHEBI:57841"/>
    </ligand>
</feature>
<feature type="binding site" evidence="1">
    <location>
        <position position="74"/>
    </location>
    <ligand>
        <name>Mg(2+)</name>
        <dbReference type="ChEBI" id="CHEBI:18420"/>
    </ligand>
</feature>
<feature type="binding site" evidence="1">
    <location>
        <position position="93"/>
    </location>
    <ligand>
        <name>Mg(2+)</name>
        <dbReference type="ChEBI" id="CHEBI:18420"/>
    </ligand>
</feature>
<feature type="binding site" evidence="1">
    <location>
        <position position="112"/>
    </location>
    <ligand>
        <name>4-amino-2-methyl-5-(diphosphooxymethyl)pyrimidine</name>
        <dbReference type="ChEBI" id="CHEBI:57841"/>
    </ligand>
</feature>
<feature type="binding site" evidence="1">
    <location>
        <begin position="139"/>
        <end position="141"/>
    </location>
    <ligand>
        <name>2-[(2R,5Z)-2-carboxy-4-methylthiazol-5(2H)-ylidene]ethyl phosphate</name>
        <dbReference type="ChEBI" id="CHEBI:62899"/>
    </ligand>
</feature>
<feature type="binding site" evidence="1">
    <location>
        <position position="142"/>
    </location>
    <ligand>
        <name>4-amino-2-methyl-5-(diphosphooxymethyl)pyrimidine</name>
        <dbReference type="ChEBI" id="CHEBI:57841"/>
    </ligand>
</feature>
<feature type="binding site" evidence="1">
    <location>
        <position position="168"/>
    </location>
    <ligand>
        <name>2-[(2R,5Z)-2-carboxy-4-methylthiazol-5(2H)-ylidene]ethyl phosphate</name>
        <dbReference type="ChEBI" id="CHEBI:62899"/>
    </ligand>
</feature>
<gene>
    <name evidence="1" type="primary">thiE</name>
    <name type="ordered locus">Mfla_2663</name>
</gene>
<accession>Q1GXW1</accession>
<organism>
    <name type="scientific">Methylobacillus flagellatus (strain ATCC 51484 / DSM 6875 / VKM B-1610 / KT)</name>
    <dbReference type="NCBI Taxonomy" id="265072"/>
    <lineage>
        <taxon>Bacteria</taxon>
        <taxon>Pseudomonadati</taxon>
        <taxon>Pseudomonadota</taxon>
        <taxon>Betaproteobacteria</taxon>
        <taxon>Nitrosomonadales</taxon>
        <taxon>Methylophilaceae</taxon>
        <taxon>Methylobacillus</taxon>
    </lineage>
</organism>
<reference key="1">
    <citation type="submission" date="2006-03" db="EMBL/GenBank/DDBJ databases">
        <title>Complete sequence of Methylobacillus flagellatus KT.</title>
        <authorList>
            <consortium name="US DOE Joint Genome Institute"/>
            <person name="Copeland A."/>
            <person name="Lucas S."/>
            <person name="Lapidus A."/>
            <person name="Barry K."/>
            <person name="Detter J.C."/>
            <person name="Glavina del Rio T."/>
            <person name="Hammon N."/>
            <person name="Israni S."/>
            <person name="Dalin E."/>
            <person name="Tice H."/>
            <person name="Pitluck S."/>
            <person name="Brettin T."/>
            <person name="Bruce D."/>
            <person name="Han C."/>
            <person name="Tapia R."/>
            <person name="Saunders E."/>
            <person name="Gilna P."/>
            <person name="Schmutz J."/>
            <person name="Larimer F."/>
            <person name="Land M."/>
            <person name="Kyrpides N."/>
            <person name="Anderson I."/>
            <person name="Richardson P."/>
        </authorList>
    </citation>
    <scope>NUCLEOTIDE SEQUENCE [LARGE SCALE GENOMIC DNA]</scope>
    <source>
        <strain>ATCC 51484 / DSM 6875 / VKM B-1610 / KT</strain>
    </source>
</reference>
<evidence type="ECO:0000255" key="1">
    <source>
        <dbReference type="HAMAP-Rule" id="MF_00097"/>
    </source>
</evidence>
<name>THIE_METFK</name>
<keyword id="KW-0460">Magnesium</keyword>
<keyword id="KW-0479">Metal-binding</keyword>
<keyword id="KW-1185">Reference proteome</keyword>
<keyword id="KW-0784">Thiamine biosynthesis</keyword>
<keyword id="KW-0808">Transferase</keyword>
<sequence length="209" mass="21534">MTRHSLPPIQGLYAITPDETDTSRLVTISEAVLAGGAGALQYRNKRVSGTQASNQAGALLDLCRRFQTPLIINDDVQLAAALDADGVHLGIDDGDIAAARAALGPDKIIGASCYNNLALARQAASLGADYVAFGACFPSSTKPDAPRADIALFAKARELGLPIVAIGGITLDNAAGIISAGADAVAVIGALWTAADIEARARQFHQLFN</sequence>
<dbReference type="EC" id="2.5.1.3" evidence="1"/>
<dbReference type="EMBL" id="CP000284">
    <property type="protein sequence ID" value="ABE50926.1"/>
    <property type="molecule type" value="Genomic_DNA"/>
</dbReference>
<dbReference type="RefSeq" id="WP_011480879.1">
    <property type="nucleotide sequence ID" value="NC_007947.1"/>
</dbReference>
<dbReference type="SMR" id="Q1GXW1"/>
<dbReference type="STRING" id="265072.Mfla_2663"/>
<dbReference type="KEGG" id="mfa:Mfla_2663"/>
<dbReference type="eggNOG" id="COG0352">
    <property type="taxonomic scope" value="Bacteria"/>
</dbReference>
<dbReference type="HOGENOM" id="CLU_018272_3_1_4"/>
<dbReference type="OrthoDB" id="9810880at2"/>
<dbReference type="UniPathway" id="UPA00060">
    <property type="reaction ID" value="UER00141"/>
</dbReference>
<dbReference type="Proteomes" id="UP000002440">
    <property type="component" value="Chromosome"/>
</dbReference>
<dbReference type="GO" id="GO:0005737">
    <property type="term" value="C:cytoplasm"/>
    <property type="evidence" value="ECO:0007669"/>
    <property type="project" value="TreeGrafter"/>
</dbReference>
<dbReference type="GO" id="GO:0000287">
    <property type="term" value="F:magnesium ion binding"/>
    <property type="evidence" value="ECO:0007669"/>
    <property type="project" value="UniProtKB-UniRule"/>
</dbReference>
<dbReference type="GO" id="GO:0004789">
    <property type="term" value="F:thiamine-phosphate diphosphorylase activity"/>
    <property type="evidence" value="ECO:0007669"/>
    <property type="project" value="UniProtKB-UniRule"/>
</dbReference>
<dbReference type="GO" id="GO:0009228">
    <property type="term" value="P:thiamine biosynthetic process"/>
    <property type="evidence" value="ECO:0007669"/>
    <property type="project" value="UniProtKB-KW"/>
</dbReference>
<dbReference type="GO" id="GO:0009229">
    <property type="term" value="P:thiamine diphosphate biosynthetic process"/>
    <property type="evidence" value="ECO:0007669"/>
    <property type="project" value="UniProtKB-UniRule"/>
</dbReference>
<dbReference type="CDD" id="cd00564">
    <property type="entry name" value="TMP_TenI"/>
    <property type="match status" value="1"/>
</dbReference>
<dbReference type="Gene3D" id="3.20.20.70">
    <property type="entry name" value="Aldolase class I"/>
    <property type="match status" value="1"/>
</dbReference>
<dbReference type="HAMAP" id="MF_00097">
    <property type="entry name" value="TMP_synthase"/>
    <property type="match status" value="1"/>
</dbReference>
<dbReference type="InterPro" id="IPR013785">
    <property type="entry name" value="Aldolase_TIM"/>
</dbReference>
<dbReference type="InterPro" id="IPR036206">
    <property type="entry name" value="ThiamineP_synth_sf"/>
</dbReference>
<dbReference type="InterPro" id="IPR022998">
    <property type="entry name" value="ThiamineP_synth_TenI"/>
</dbReference>
<dbReference type="InterPro" id="IPR034291">
    <property type="entry name" value="TMP_synthase"/>
</dbReference>
<dbReference type="NCBIfam" id="TIGR00693">
    <property type="entry name" value="thiE"/>
    <property type="match status" value="1"/>
</dbReference>
<dbReference type="PANTHER" id="PTHR20857">
    <property type="entry name" value="THIAMINE-PHOSPHATE PYROPHOSPHORYLASE"/>
    <property type="match status" value="1"/>
</dbReference>
<dbReference type="PANTHER" id="PTHR20857:SF15">
    <property type="entry name" value="THIAMINE-PHOSPHATE SYNTHASE"/>
    <property type="match status" value="1"/>
</dbReference>
<dbReference type="Pfam" id="PF02581">
    <property type="entry name" value="TMP-TENI"/>
    <property type="match status" value="1"/>
</dbReference>
<dbReference type="SUPFAM" id="SSF51391">
    <property type="entry name" value="Thiamin phosphate synthase"/>
    <property type="match status" value="1"/>
</dbReference>